<keyword id="KW-0021">Allosteric enzyme</keyword>
<keyword id="KW-0035">Amyloplast</keyword>
<keyword id="KW-0067">ATP-binding</keyword>
<keyword id="KW-0150">Chloroplast</keyword>
<keyword id="KW-0547">Nucleotide-binding</keyword>
<keyword id="KW-0548">Nucleotidyltransferase</keyword>
<keyword id="KW-0934">Plastid</keyword>
<keyword id="KW-0750">Starch biosynthesis</keyword>
<keyword id="KW-0808">Transferase</keyword>
<reference key="1">
    <citation type="journal article" date="1992" name="Plant Mol. Biol.">
        <title>PCR amplification and sequences of cDNA clones for the small and large subunits of ADP-glucose pyrophosphorylase from barley tissues.</title>
        <authorList>
            <person name="Villand P."/>
            <person name="Aalen R."/>
            <person name="Olsen O.-A."/>
            <person name="Luethi E."/>
            <person name="Loenneborg A."/>
            <person name="Kleczkowski L.A."/>
        </authorList>
    </citation>
    <scope>NUCLEOTIDE SEQUENCE [MRNA]</scope>
    <source>
        <strain>cv. Bomi</strain>
        <tissue>Leaf</tissue>
    </source>
</reference>
<accession>P55239</accession>
<feature type="chain" id="PRO_0000195356" description="Glucose-1-phosphate adenylyltransferase large subunit 2">
    <location>
        <begin position="1" status="less than"/>
        <end position="181" status="greater than"/>
    </location>
</feature>
<feature type="non-terminal residue">
    <location>
        <position position="1"/>
    </location>
</feature>
<feature type="non-terminal residue">
    <location>
        <position position="181"/>
    </location>
</feature>
<dbReference type="EC" id="2.7.7.27"/>
<dbReference type="EMBL" id="X62243">
    <property type="protein sequence ID" value="CAB37842.1"/>
    <property type="molecule type" value="mRNA"/>
</dbReference>
<dbReference type="PIR" id="S22526">
    <property type="entry name" value="S22526"/>
</dbReference>
<dbReference type="SMR" id="P55239"/>
<dbReference type="SABIO-RK" id="P55239"/>
<dbReference type="UniPathway" id="UPA00152"/>
<dbReference type="ExpressionAtlas" id="P55239">
    <property type="expression patterns" value="baseline and differential"/>
</dbReference>
<dbReference type="GO" id="GO:0009501">
    <property type="term" value="C:amyloplast"/>
    <property type="evidence" value="ECO:0007669"/>
    <property type="project" value="UniProtKB-SubCell"/>
</dbReference>
<dbReference type="GO" id="GO:0009507">
    <property type="term" value="C:chloroplast"/>
    <property type="evidence" value="ECO:0007669"/>
    <property type="project" value="UniProtKB-SubCell"/>
</dbReference>
<dbReference type="GO" id="GO:0005524">
    <property type="term" value="F:ATP binding"/>
    <property type="evidence" value="ECO:0007669"/>
    <property type="project" value="UniProtKB-KW"/>
</dbReference>
<dbReference type="GO" id="GO:0008878">
    <property type="term" value="F:glucose-1-phosphate adenylyltransferase activity"/>
    <property type="evidence" value="ECO:0007669"/>
    <property type="project" value="UniProtKB-EC"/>
</dbReference>
<dbReference type="GO" id="GO:0005978">
    <property type="term" value="P:glycogen biosynthetic process"/>
    <property type="evidence" value="ECO:0007669"/>
    <property type="project" value="InterPro"/>
</dbReference>
<dbReference type="GO" id="GO:0019252">
    <property type="term" value="P:starch biosynthetic process"/>
    <property type="evidence" value="ECO:0007669"/>
    <property type="project" value="UniProtKB-UniPathway"/>
</dbReference>
<dbReference type="Gene3D" id="2.160.10.10">
    <property type="entry name" value="Hexapeptide repeat proteins"/>
    <property type="match status" value="1"/>
</dbReference>
<dbReference type="Gene3D" id="3.90.550.10">
    <property type="entry name" value="Spore Coat Polysaccharide Biosynthesis Protein SpsA, Chain A"/>
    <property type="match status" value="1"/>
</dbReference>
<dbReference type="InterPro" id="IPR011831">
    <property type="entry name" value="ADP-Glc_PPase"/>
</dbReference>
<dbReference type="InterPro" id="IPR005836">
    <property type="entry name" value="ADP_Glu_pyroP_CS"/>
</dbReference>
<dbReference type="InterPro" id="IPR005835">
    <property type="entry name" value="NTP_transferase_dom"/>
</dbReference>
<dbReference type="InterPro" id="IPR029044">
    <property type="entry name" value="Nucleotide-diphossugar_trans"/>
</dbReference>
<dbReference type="PANTHER" id="PTHR43523:SF12">
    <property type="entry name" value="GLUCOSE-1-PHOSPHATE ADENYLYLTRANSFERASE LARGE SUBUNIT 1, CHLOROPLASTIC-RELATED"/>
    <property type="match status" value="1"/>
</dbReference>
<dbReference type="PANTHER" id="PTHR43523">
    <property type="entry name" value="GLUCOSE-1-PHOSPHATE ADENYLYLTRANSFERASE-RELATED"/>
    <property type="match status" value="1"/>
</dbReference>
<dbReference type="Pfam" id="PF25247">
    <property type="entry name" value="LbH_GLGC"/>
    <property type="match status" value="1"/>
</dbReference>
<dbReference type="Pfam" id="PF00483">
    <property type="entry name" value="NTP_transferase"/>
    <property type="match status" value="1"/>
</dbReference>
<dbReference type="SUPFAM" id="SSF53448">
    <property type="entry name" value="Nucleotide-diphospho-sugar transferases"/>
    <property type="match status" value="1"/>
</dbReference>
<dbReference type="PROSITE" id="PS00810">
    <property type="entry name" value="ADP_GLC_PYROPHOSPH_3"/>
    <property type="match status" value="1"/>
</dbReference>
<proteinExistence type="evidence at transcript level"/>
<comment type="function">
    <text>This protein plays a role in synthesis of starch. It catalyzes the synthesis of the activated glycosyl donor, ADP-glucose from Glc-1-P and ATP.</text>
</comment>
<comment type="catalytic activity">
    <reaction>
        <text>alpha-D-glucose 1-phosphate + ATP + H(+) = ADP-alpha-D-glucose + diphosphate</text>
        <dbReference type="Rhea" id="RHEA:12120"/>
        <dbReference type="ChEBI" id="CHEBI:15378"/>
        <dbReference type="ChEBI" id="CHEBI:30616"/>
        <dbReference type="ChEBI" id="CHEBI:33019"/>
        <dbReference type="ChEBI" id="CHEBI:57498"/>
        <dbReference type="ChEBI" id="CHEBI:58601"/>
        <dbReference type="EC" id="2.7.7.27"/>
    </reaction>
</comment>
<comment type="activity regulation">
    <text>Highly active without 3'phosphoglycerate, and is only slightly affected by the activator 3'phosphoglycerate and inhibitor orthophosphate.</text>
</comment>
<comment type="pathway">
    <text>Glycan biosynthesis; starch biosynthesis.</text>
</comment>
<comment type="subunit">
    <text>Heterotetramer.</text>
</comment>
<comment type="subcellular location">
    <subcellularLocation>
        <location>Plastid</location>
        <location>Chloroplast</location>
    </subcellularLocation>
    <subcellularLocation>
        <location>Plastid</location>
        <location>Amyloplast</location>
    </subcellularLocation>
    <text>Found in the chloroplast in leaf. Found in the plastid in the developing endosperm.</text>
</comment>
<comment type="tissue specificity">
    <text>Leaves.</text>
</comment>
<comment type="similarity">
    <text evidence="1">Belongs to the bacterial/plant glucose-1-phosphate adenylyltransferase family.</text>
</comment>
<organism>
    <name type="scientific">Hordeum vulgare</name>
    <name type="common">Barley</name>
    <dbReference type="NCBI Taxonomy" id="4513"/>
    <lineage>
        <taxon>Eukaryota</taxon>
        <taxon>Viridiplantae</taxon>
        <taxon>Streptophyta</taxon>
        <taxon>Embryophyta</taxon>
        <taxon>Tracheophyta</taxon>
        <taxon>Spermatophyta</taxon>
        <taxon>Magnoliopsida</taxon>
        <taxon>Liliopsida</taxon>
        <taxon>Poales</taxon>
        <taxon>Poaceae</taxon>
        <taxon>BOP clade</taxon>
        <taxon>Pooideae</taxon>
        <taxon>Triticodae</taxon>
        <taxon>Triticeae</taxon>
        <taxon>Hordeinae</taxon>
        <taxon>Hordeum</taxon>
    </lineage>
</organism>
<evidence type="ECO:0000305" key="1"/>
<name>GLGL2_HORVU</name>
<sequence length="181" mass="20329">KYPYIAGMGVYIFKKEILLNLLRWRFPTANDFGSEIIPAAAREINVKAYLFNDYWEDIGTIKSFFEANLALAEQPSKFSFYDASKPMYTSRRNLPPSMISGSKITDSIISHGCFLDKCRVEHSVVGIRSRIGSNVHLKDTVMLGADFYETDAERGDQLAEGKVPIGIGENTSIQNCIIDMN</sequence>
<protein>
    <recommendedName>
        <fullName>Glucose-1-phosphate adenylyltransferase large subunit 2</fullName>
        <ecNumber>2.7.7.27</ecNumber>
    </recommendedName>
    <alternativeName>
        <fullName>ADP-glucose pyrophosphorylase</fullName>
    </alternativeName>
    <alternativeName>
        <fullName>ADP-glucose synthase</fullName>
    </alternativeName>
    <alternativeName>
        <fullName>AGPase S</fullName>
    </alternativeName>
    <alternativeName>
        <fullName>Alpha-D-glucose-1-phosphate adenyl transferase</fullName>
    </alternativeName>
    <alternativeName>
        <fullName>BLPL</fullName>
    </alternativeName>
</protein>